<proteinExistence type="evidence at transcript level"/>
<evidence type="ECO:0000250" key="1"/>
<evidence type="ECO:0000250" key="2">
    <source>
        <dbReference type="UniProtKB" id="P68363"/>
    </source>
</evidence>
<evidence type="ECO:0000305" key="3"/>
<reference key="1">
    <citation type="journal article" date="2001" name="Plant Mol. Biol.">
        <title>Alpha-tubulin genes are differentially expressed during leaf cell development in barley (Hordeum vulgare L.).</title>
        <authorList>
            <person name="Schroeder J."/>
            <person name="Stenger H."/>
            <person name="Wernicke W."/>
        </authorList>
    </citation>
    <scope>NUCLEOTIDE SEQUENCE [MRNA]</scope>
    <source>
        <strain>cv. Igri</strain>
        <tissue>Leaf</tissue>
    </source>
</reference>
<protein>
    <recommendedName>
        <fullName>Tubulin alpha-1 chain</fullName>
        <ecNumber evidence="2">3.6.5.-</ecNumber>
    </recommendedName>
</protein>
<dbReference type="EC" id="3.6.5.-" evidence="2"/>
<dbReference type="EMBL" id="X99623">
    <property type="protein sequence ID" value="CAA67942.1"/>
    <property type="molecule type" value="mRNA"/>
</dbReference>
<dbReference type="SMR" id="Q43473"/>
<dbReference type="OMA" id="VIDANCT"/>
<dbReference type="ExpressionAtlas" id="Q43473">
    <property type="expression patterns" value="baseline and differential"/>
</dbReference>
<dbReference type="GO" id="GO:0005737">
    <property type="term" value="C:cytoplasm"/>
    <property type="evidence" value="ECO:0007669"/>
    <property type="project" value="UniProtKB-KW"/>
</dbReference>
<dbReference type="GO" id="GO:0005874">
    <property type="term" value="C:microtubule"/>
    <property type="evidence" value="ECO:0007669"/>
    <property type="project" value="UniProtKB-KW"/>
</dbReference>
<dbReference type="GO" id="GO:0005525">
    <property type="term" value="F:GTP binding"/>
    <property type="evidence" value="ECO:0007669"/>
    <property type="project" value="UniProtKB-KW"/>
</dbReference>
<dbReference type="GO" id="GO:0016787">
    <property type="term" value="F:hydrolase activity"/>
    <property type="evidence" value="ECO:0007669"/>
    <property type="project" value="UniProtKB-KW"/>
</dbReference>
<dbReference type="GO" id="GO:0046872">
    <property type="term" value="F:metal ion binding"/>
    <property type="evidence" value="ECO:0007669"/>
    <property type="project" value="UniProtKB-KW"/>
</dbReference>
<dbReference type="GO" id="GO:0005200">
    <property type="term" value="F:structural constituent of cytoskeleton"/>
    <property type="evidence" value="ECO:0007669"/>
    <property type="project" value="InterPro"/>
</dbReference>
<dbReference type="GO" id="GO:0007017">
    <property type="term" value="P:microtubule-based process"/>
    <property type="evidence" value="ECO:0007669"/>
    <property type="project" value="InterPro"/>
</dbReference>
<dbReference type="CDD" id="cd02186">
    <property type="entry name" value="alpha_tubulin"/>
    <property type="match status" value="1"/>
</dbReference>
<dbReference type="FunFam" id="1.10.287.600:FF:000005">
    <property type="entry name" value="Tubulin alpha chain"/>
    <property type="match status" value="1"/>
</dbReference>
<dbReference type="FunFam" id="3.30.1330.20:FF:000001">
    <property type="entry name" value="Tubulin alpha chain"/>
    <property type="match status" value="1"/>
</dbReference>
<dbReference type="FunFam" id="3.40.50.1440:FF:000004">
    <property type="entry name" value="Tubulin alpha chain"/>
    <property type="match status" value="1"/>
</dbReference>
<dbReference type="Gene3D" id="1.10.287.600">
    <property type="entry name" value="Helix hairpin bin"/>
    <property type="match status" value="1"/>
</dbReference>
<dbReference type="Gene3D" id="3.30.1330.20">
    <property type="entry name" value="Tubulin/FtsZ, C-terminal domain"/>
    <property type="match status" value="1"/>
</dbReference>
<dbReference type="Gene3D" id="3.40.50.1440">
    <property type="entry name" value="Tubulin/FtsZ, GTPase domain"/>
    <property type="match status" value="1"/>
</dbReference>
<dbReference type="InterPro" id="IPR002452">
    <property type="entry name" value="Alpha_tubulin"/>
</dbReference>
<dbReference type="InterPro" id="IPR013838">
    <property type="entry name" value="Beta-tubulin_BS"/>
</dbReference>
<dbReference type="InterPro" id="IPR008280">
    <property type="entry name" value="Tub_FtsZ_C"/>
</dbReference>
<dbReference type="InterPro" id="IPR000217">
    <property type="entry name" value="Tubulin"/>
</dbReference>
<dbReference type="InterPro" id="IPR037103">
    <property type="entry name" value="Tubulin/FtsZ-like_C"/>
</dbReference>
<dbReference type="InterPro" id="IPR018316">
    <property type="entry name" value="Tubulin/FtsZ_2-layer-sand-dom"/>
</dbReference>
<dbReference type="InterPro" id="IPR036525">
    <property type="entry name" value="Tubulin/FtsZ_GTPase_sf"/>
</dbReference>
<dbReference type="InterPro" id="IPR023123">
    <property type="entry name" value="Tubulin_C"/>
</dbReference>
<dbReference type="InterPro" id="IPR017975">
    <property type="entry name" value="Tubulin_CS"/>
</dbReference>
<dbReference type="InterPro" id="IPR003008">
    <property type="entry name" value="Tubulin_FtsZ_GTPase"/>
</dbReference>
<dbReference type="PANTHER" id="PTHR11588">
    <property type="entry name" value="TUBULIN"/>
    <property type="match status" value="1"/>
</dbReference>
<dbReference type="Pfam" id="PF00091">
    <property type="entry name" value="Tubulin"/>
    <property type="match status" value="1"/>
</dbReference>
<dbReference type="Pfam" id="PF03953">
    <property type="entry name" value="Tubulin_C"/>
    <property type="match status" value="1"/>
</dbReference>
<dbReference type="PRINTS" id="PR01162">
    <property type="entry name" value="ALPHATUBULIN"/>
</dbReference>
<dbReference type="PRINTS" id="PR01161">
    <property type="entry name" value="TUBULIN"/>
</dbReference>
<dbReference type="SMART" id="SM00864">
    <property type="entry name" value="Tubulin"/>
    <property type="match status" value="1"/>
</dbReference>
<dbReference type="SMART" id="SM00865">
    <property type="entry name" value="Tubulin_C"/>
    <property type="match status" value="1"/>
</dbReference>
<dbReference type="SUPFAM" id="SSF55307">
    <property type="entry name" value="Tubulin C-terminal domain-like"/>
    <property type="match status" value="1"/>
</dbReference>
<dbReference type="SUPFAM" id="SSF52490">
    <property type="entry name" value="Tubulin nucleotide-binding domain-like"/>
    <property type="match status" value="1"/>
</dbReference>
<dbReference type="PROSITE" id="PS00227">
    <property type="entry name" value="TUBULIN"/>
    <property type="match status" value="1"/>
</dbReference>
<feature type="chain" id="PRO_0000048182" description="Tubulin alpha-1 chain">
    <location>
        <begin position="1"/>
        <end position="450"/>
    </location>
</feature>
<feature type="active site" evidence="2">
    <location>
        <position position="254"/>
    </location>
</feature>
<feature type="binding site" evidence="2">
    <location>
        <position position="11"/>
    </location>
    <ligand>
        <name>GTP</name>
        <dbReference type="ChEBI" id="CHEBI:37565"/>
    </ligand>
</feature>
<feature type="binding site" evidence="2">
    <location>
        <position position="71"/>
    </location>
    <ligand>
        <name>GTP</name>
        <dbReference type="ChEBI" id="CHEBI:37565"/>
    </ligand>
</feature>
<feature type="binding site" evidence="2">
    <location>
        <position position="71"/>
    </location>
    <ligand>
        <name>Mg(2+)</name>
        <dbReference type="ChEBI" id="CHEBI:18420"/>
    </ligand>
</feature>
<feature type="binding site" evidence="2">
    <location>
        <position position="144"/>
    </location>
    <ligand>
        <name>GTP</name>
        <dbReference type="ChEBI" id="CHEBI:37565"/>
    </ligand>
</feature>
<feature type="binding site" evidence="2">
    <location>
        <position position="145"/>
    </location>
    <ligand>
        <name>GTP</name>
        <dbReference type="ChEBI" id="CHEBI:37565"/>
    </ligand>
</feature>
<feature type="binding site" evidence="2">
    <location>
        <position position="179"/>
    </location>
    <ligand>
        <name>GTP</name>
        <dbReference type="ChEBI" id="CHEBI:37565"/>
    </ligand>
</feature>
<feature type="binding site" evidence="2">
    <location>
        <position position="206"/>
    </location>
    <ligand>
        <name>GTP</name>
        <dbReference type="ChEBI" id="CHEBI:37565"/>
    </ligand>
</feature>
<feature type="binding site" evidence="2">
    <location>
        <position position="228"/>
    </location>
    <ligand>
        <name>GTP</name>
        <dbReference type="ChEBI" id="CHEBI:37565"/>
    </ligand>
</feature>
<feature type="site" description="Involved in polymerization" evidence="1">
    <location>
        <position position="450"/>
    </location>
</feature>
<accession>Q43473</accession>
<gene>
    <name type="primary">TUBA1</name>
    <name type="synonym">ATUB1</name>
</gene>
<sequence>MREIISIHIGQAGIQVGNACWELYCLEHGINQDGTMPSDTTVGVAHDAFNTFFSETGAGKHVPRAIFVDLEPTVIDEVRTGAYRQLFHPEQLISGKEDAANNFARGHYTVGKEIVDLCLDRVRKLADNCTGLQGFLVFNAVGGGTGSGLGSLLLERLSVDYGKKSKLGFTIYPSPQVSTAVVEPYNSVLSTHSLLEHTDVAVLLDNEAIYDICRRSLDIERPTYTNLNRLISQIISSLTTSLRFDGAINVDVTEFQTNLVPYPRIHFMLSSYAPVISAEKAYHEQLSVPEITNAVFEPSSMMAKCDPRHGKYMACCLMYRGDVVPKDVNAAVATIKTKRTVQFVDWCPTGFKCGINYQPPSVVPGGDLAKVQRAVCMISNNTAVAEVFSRIDHKFDLMYAKRAFVHWYVGEGMEEGEFSEAREDLAALEKDYEEVGAEGADDEGDEGDDY</sequence>
<comment type="function">
    <text>Tubulin is the major constituent of microtubules, a cylinder consisting of laterally associated linear protofilaments composed of alpha- and beta-tubulin heterodimers. Microtubules grow by the addition of GTP-tubulin dimers to the microtubule end, where a stabilizing cap forms. Below the cap, tubulin dimers are in GDP-bound state, owing to GTPase activity of alpha-tubulin.</text>
</comment>
<comment type="catalytic activity">
    <reaction evidence="2">
        <text>GTP + H2O = GDP + phosphate + H(+)</text>
        <dbReference type="Rhea" id="RHEA:19669"/>
        <dbReference type="ChEBI" id="CHEBI:15377"/>
        <dbReference type="ChEBI" id="CHEBI:15378"/>
        <dbReference type="ChEBI" id="CHEBI:37565"/>
        <dbReference type="ChEBI" id="CHEBI:43474"/>
        <dbReference type="ChEBI" id="CHEBI:58189"/>
    </reaction>
    <physiologicalReaction direction="left-to-right" evidence="2">
        <dbReference type="Rhea" id="RHEA:19670"/>
    </physiologicalReaction>
</comment>
<comment type="cofactor">
    <cofactor evidence="2">
        <name>Mg(2+)</name>
        <dbReference type="ChEBI" id="CHEBI:18420"/>
    </cofactor>
</comment>
<comment type="subunit">
    <text>Dimer of alpha and beta chains. A typical microtubule is a hollow water-filled tube with an outer diameter of 25 nm and an inner diameter of 15 nM. Alpha-beta heterodimers associate head-to-tail to form protofilaments running lengthwise along the microtubule wall with the beta-tubulin subunit facing the microtubule plus end conferring a structural polarity. Microtubules usually have 13 protofilaments but different protofilament numbers can be found in some organisms and specialized cells.</text>
</comment>
<comment type="subcellular location">
    <subcellularLocation>
        <location>Cytoplasm</location>
        <location>Cytoskeleton</location>
    </subcellularLocation>
</comment>
<comment type="PTM">
    <text evidence="1">Undergoes a tyrosination/detyrosination cycle, the cyclic removal and re-addition of a C-terminal tyrosine residue by the enzymes tubulin tyrosine carboxypeptidase (TTCP) and tubulin tyrosine ligase (TTL), respectively.</text>
</comment>
<comment type="similarity">
    <text evidence="3">Belongs to the tubulin family.</text>
</comment>
<name>TBA1_HORVU</name>
<organism>
    <name type="scientific">Hordeum vulgare</name>
    <name type="common">Barley</name>
    <dbReference type="NCBI Taxonomy" id="4513"/>
    <lineage>
        <taxon>Eukaryota</taxon>
        <taxon>Viridiplantae</taxon>
        <taxon>Streptophyta</taxon>
        <taxon>Embryophyta</taxon>
        <taxon>Tracheophyta</taxon>
        <taxon>Spermatophyta</taxon>
        <taxon>Magnoliopsida</taxon>
        <taxon>Liliopsida</taxon>
        <taxon>Poales</taxon>
        <taxon>Poaceae</taxon>
        <taxon>BOP clade</taxon>
        <taxon>Pooideae</taxon>
        <taxon>Triticodae</taxon>
        <taxon>Triticeae</taxon>
        <taxon>Hordeinae</taxon>
        <taxon>Hordeum</taxon>
    </lineage>
</organism>
<keyword id="KW-0963">Cytoplasm</keyword>
<keyword id="KW-0206">Cytoskeleton</keyword>
<keyword id="KW-0342">GTP-binding</keyword>
<keyword id="KW-0378">Hydrolase</keyword>
<keyword id="KW-0460">Magnesium</keyword>
<keyword id="KW-0479">Metal-binding</keyword>
<keyword id="KW-0493">Microtubule</keyword>
<keyword id="KW-0547">Nucleotide-binding</keyword>